<reference key="1">
    <citation type="journal article" date="1995" name="J. Bacteriol.">
        <title>Identification and sequence analysis of lpfABCDE, a putative fimbrial operon of Salmonella typhimurium.</title>
        <authorList>
            <person name="Baeumler A.J."/>
            <person name="Heffron F."/>
        </authorList>
    </citation>
    <scope>NUCLEOTIDE SEQUENCE [GENOMIC DNA]</scope>
    <source>
        <strain>ATCC 14028 / SGSG 2980 / CDC 6516-60 / NCTC 12023</strain>
    </source>
</reference>
<reference key="2">
    <citation type="journal article" date="2001" name="Nature">
        <title>Complete genome sequence of Salmonella enterica serovar Typhimurium LT2.</title>
        <authorList>
            <person name="McClelland M."/>
            <person name="Sanderson K.E."/>
            <person name="Spieth J."/>
            <person name="Clifton S.W."/>
            <person name="Latreille P."/>
            <person name="Courtney L."/>
            <person name="Porwollik S."/>
            <person name="Ali J."/>
            <person name="Dante M."/>
            <person name="Du F."/>
            <person name="Hou S."/>
            <person name="Layman D."/>
            <person name="Leonard S."/>
            <person name="Nguyen C."/>
            <person name="Scott K."/>
            <person name="Holmes A."/>
            <person name="Grewal N."/>
            <person name="Mulvaney E."/>
            <person name="Ryan E."/>
            <person name="Sun H."/>
            <person name="Florea L."/>
            <person name="Miller W."/>
            <person name="Stoneking T."/>
            <person name="Nhan M."/>
            <person name="Waterston R."/>
            <person name="Wilson R.K."/>
        </authorList>
    </citation>
    <scope>NUCLEOTIDE SEQUENCE [LARGE SCALE GENOMIC DNA]</scope>
    <source>
        <strain>LT2 / SGSC1412 / ATCC 700720</strain>
    </source>
</reference>
<feature type="signal peptide" evidence="2">
    <location>
        <begin position="1"/>
        <end position="23"/>
    </location>
</feature>
<feature type="chain" id="PRO_0000009281" description="Chaperone protein LpfB">
    <location>
        <begin position="24"/>
        <end position="232"/>
    </location>
</feature>
<feature type="sequence conflict" description="In Ref. 1; AAA73967." evidence="3" ref="1">
    <original>G</original>
    <variation>A</variation>
    <location>
        <position position="142"/>
    </location>
</feature>
<feature type="sequence conflict" description="In Ref. 1; AAA73967." evidence="3" ref="1">
    <original>G</original>
    <variation>A</variation>
    <location>
        <position position="145"/>
    </location>
</feature>
<sequence length="232" mass="25461">MNRSRLISCTALVLALIAQNSFAGGVALSSTRVIYDGSRKEASLTVNNKSTTDEFLIQSWIDDANGNKKTPFIITPPLFKLSPTKNNVLRIVNTTNTLPQDRESVYWINVKAIPAKSEDAEAKNVLQIAVRTRLKLFYRPAGLKGNSMDGWNKLQFTSAGANQIKVENPSAFNLTFNKFYANGRDIEKTGMVPAKGSLNIELPAGTGKVSEVKYNIINDFGTAGDMLTQRVN</sequence>
<name>LPFB_SALTY</name>
<dbReference type="EMBL" id="U18559">
    <property type="protein sequence ID" value="AAA73967.1"/>
    <property type="molecule type" value="Genomic_DNA"/>
</dbReference>
<dbReference type="EMBL" id="AE006468">
    <property type="protein sequence ID" value="AAL22499.1"/>
    <property type="molecule type" value="Genomic_DNA"/>
</dbReference>
<dbReference type="PIR" id="B56271">
    <property type="entry name" value="B56271"/>
</dbReference>
<dbReference type="RefSeq" id="NP_462540.1">
    <property type="nucleotide sequence ID" value="NC_003197.2"/>
</dbReference>
<dbReference type="RefSeq" id="WP_001082123.1">
    <property type="nucleotide sequence ID" value="NC_003197.2"/>
</dbReference>
<dbReference type="SMR" id="P43661"/>
<dbReference type="STRING" id="99287.STM3639"/>
<dbReference type="PaxDb" id="99287-STM3639"/>
<dbReference type="GeneID" id="1255163"/>
<dbReference type="KEGG" id="stm:STM3639"/>
<dbReference type="PATRIC" id="fig|99287.12.peg.3848"/>
<dbReference type="HOGENOM" id="CLU_070768_2_2_6"/>
<dbReference type="OMA" id="NITFNQF"/>
<dbReference type="PhylomeDB" id="P43661"/>
<dbReference type="BioCyc" id="SENT99287:STM3639-MONOMER"/>
<dbReference type="Proteomes" id="UP000001014">
    <property type="component" value="Chromosome"/>
</dbReference>
<dbReference type="GO" id="GO:0030288">
    <property type="term" value="C:outer membrane-bounded periplasmic space"/>
    <property type="evidence" value="ECO:0000318"/>
    <property type="project" value="GO_Central"/>
</dbReference>
<dbReference type="GO" id="GO:0044183">
    <property type="term" value="F:protein folding chaperone"/>
    <property type="evidence" value="ECO:0000318"/>
    <property type="project" value="GO_Central"/>
</dbReference>
<dbReference type="GO" id="GO:0071555">
    <property type="term" value="P:cell wall organization"/>
    <property type="evidence" value="ECO:0007669"/>
    <property type="project" value="InterPro"/>
</dbReference>
<dbReference type="GO" id="GO:0061077">
    <property type="term" value="P:chaperone-mediated protein folding"/>
    <property type="evidence" value="ECO:0000318"/>
    <property type="project" value="GO_Central"/>
</dbReference>
<dbReference type="FunFam" id="2.60.40.10:FF:000458">
    <property type="entry name" value="Molecular chaperone FimC"/>
    <property type="match status" value="1"/>
</dbReference>
<dbReference type="Gene3D" id="2.60.40.10">
    <property type="entry name" value="Immunoglobulins"/>
    <property type="match status" value="2"/>
</dbReference>
<dbReference type="InterPro" id="IPR013783">
    <property type="entry name" value="Ig-like_fold"/>
</dbReference>
<dbReference type="InterPro" id="IPR008962">
    <property type="entry name" value="PapD-like_sf"/>
</dbReference>
<dbReference type="InterPro" id="IPR050643">
    <property type="entry name" value="Periplasmic_pilus_chap"/>
</dbReference>
<dbReference type="InterPro" id="IPR036316">
    <property type="entry name" value="Pili_assmbl_chap_C_dom_sf"/>
</dbReference>
<dbReference type="InterPro" id="IPR001829">
    <property type="entry name" value="Pili_assmbl_chaperone_bac"/>
</dbReference>
<dbReference type="InterPro" id="IPR016148">
    <property type="entry name" value="Pili_assmbl_chaperone_C"/>
</dbReference>
<dbReference type="InterPro" id="IPR018046">
    <property type="entry name" value="Pili_assmbl_chaperone_CS"/>
</dbReference>
<dbReference type="InterPro" id="IPR016147">
    <property type="entry name" value="Pili_assmbl_chaperone_N"/>
</dbReference>
<dbReference type="NCBIfam" id="NF011755">
    <property type="entry name" value="PRK15208.1"/>
    <property type="match status" value="1"/>
</dbReference>
<dbReference type="PANTHER" id="PTHR30251:SF11">
    <property type="entry name" value="CHAPERONE PROTEIN FIMC-RELATED"/>
    <property type="match status" value="1"/>
</dbReference>
<dbReference type="PANTHER" id="PTHR30251">
    <property type="entry name" value="PILUS ASSEMBLY CHAPERONE"/>
    <property type="match status" value="1"/>
</dbReference>
<dbReference type="Pfam" id="PF02753">
    <property type="entry name" value="PapD_C"/>
    <property type="match status" value="1"/>
</dbReference>
<dbReference type="Pfam" id="PF00345">
    <property type="entry name" value="PapD_N"/>
    <property type="match status" value="1"/>
</dbReference>
<dbReference type="PRINTS" id="PR00969">
    <property type="entry name" value="CHAPERONPILI"/>
</dbReference>
<dbReference type="SUPFAM" id="SSF49354">
    <property type="entry name" value="PapD-like"/>
    <property type="match status" value="1"/>
</dbReference>
<dbReference type="SUPFAM" id="SSF49584">
    <property type="entry name" value="Periplasmic chaperone C-domain"/>
    <property type="match status" value="1"/>
</dbReference>
<dbReference type="PROSITE" id="PS00635">
    <property type="entry name" value="PILI_CHAPERONE"/>
    <property type="match status" value="1"/>
</dbReference>
<proteinExistence type="inferred from homology"/>
<accession>P43661</accession>
<protein>
    <recommendedName>
        <fullName>Chaperone protein LpfB</fullName>
    </recommendedName>
</protein>
<comment type="function">
    <text>Required for the biogenesis of long polar fimbria; binds and interact with LpfA.</text>
</comment>
<comment type="subcellular location">
    <subcellularLocation>
        <location evidence="1">Periplasm</location>
    </subcellularLocation>
</comment>
<comment type="similarity">
    <text evidence="3">Belongs to the periplasmic pilus chaperone family.</text>
</comment>
<gene>
    <name type="primary">lpfB</name>
    <name type="ordered locus">STM3639</name>
</gene>
<evidence type="ECO:0000250" key="1"/>
<evidence type="ECO:0000255" key="2"/>
<evidence type="ECO:0000305" key="3"/>
<organism>
    <name type="scientific">Salmonella typhimurium (strain LT2 / SGSC1412 / ATCC 700720)</name>
    <dbReference type="NCBI Taxonomy" id="99287"/>
    <lineage>
        <taxon>Bacteria</taxon>
        <taxon>Pseudomonadati</taxon>
        <taxon>Pseudomonadota</taxon>
        <taxon>Gammaproteobacteria</taxon>
        <taxon>Enterobacterales</taxon>
        <taxon>Enterobacteriaceae</taxon>
        <taxon>Salmonella</taxon>
    </lineage>
</organism>
<keyword id="KW-0143">Chaperone</keyword>
<keyword id="KW-1029">Fimbrium biogenesis</keyword>
<keyword id="KW-0393">Immunoglobulin domain</keyword>
<keyword id="KW-0574">Periplasm</keyword>
<keyword id="KW-1185">Reference proteome</keyword>
<keyword id="KW-0732">Signal</keyword>